<accession>P13720</accession>
<sequence length="335" mass="38281">MKKWFPAFLFLSLSGGNDALAGWHNVMFYAFNDYLTTNAGNVKVIDQPQLYIPWNTGSATATYYSCSGPEFASGVYFQEYLAWMVVPKHVYTNEGFNIFLDVQSKYGWSMENENDKDFYFFVNGYEWDTWTNNGARICFYPGNMKQLNNKFNDLVFRVLLPVDLPKGHYNFPVRYIRGIQHHYYDLWQDHYKMPYDQIKQLPATNTLMLSFDNVGGCQPSTQVLNIDHGSIVIDRANGNIASQTLSIYCDVPVSVKISLLRNTPPIYNNNKFSVGLGNGWDSIISLDGVEQSEEILRWYTAGSKTVKIESRLYGEEGKRKPGELSGSMTMVLSFP</sequence>
<reference key="1">
    <citation type="journal article" date="1987" name="Proc. Natl. Acad. Sci. U.S.A.">
        <title>The PapG protein is the alpha-D-galactopyranosyl-(1--&gt;4)-beta-D-galactopyranose-binding adhesin of uropathogenic Escherichia coli.</title>
        <authorList>
            <person name="Lund B."/>
            <person name="Lindberg F."/>
            <person name="Marklund B.-I."/>
            <person name="Normark S."/>
        </authorList>
    </citation>
    <scope>NUCLEOTIDE SEQUENCE [GENOMIC DNA]</scope>
    <scope>FUNCTION</scope>
    <scope>SUBCELLULAR LOCATION</scope>
    <source>
        <strain>ATCC 700336 / J96 / UPEC</strain>
    </source>
</reference>
<reference key="2">
    <citation type="journal article" date="1988" name="J. Bacteriol.">
        <title>Structure and antigenic properties of the tip-located P pilus proteins of uropathogenic Escherichia coli.</title>
        <authorList>
            <person name="Lund B."/>
            <person name="Lindberg F."/>
            <person name="Normark S."/>
        </authorList>
    </citation>
    <scope>NUCLEOTIDE SEQUENCE [GENOMIC DNA]</scope>
    <source>
        <strain>ATCC 700336 / J96 / UPEC</strain>
    </source>
</reference>
<reference key="3">
    <citation type="journal article" date="1992" name="Mol. Microbiol.">
        <title>Horizontal gene transfer of the Escherichia coli pap and prs pili operons as a mechanism for the development of tissue-specific adhesive properties.</title>
        <authorList>
            <person name="Marklund B.-I."/>
            <person name="Tennent J.M."/>
            <person name="Garcia E."/>
            <person name="Hamers A."/>
            <person name="Baga M."/>
            <person name="Lindberg F."/>
            <person name="Gaastra W."/>
            <person name="Normark S."/>
        </authorList>
    </citation>
    <scope>NUCLEOTIDE SEQUENCE [GENOMIC DNA]</scope>
    <source>
        <strain>ATCC 700336 / J96 / UPEC</strain>
    </source>
</reference>
<reference key="4">
    <citation type="journal article" date="1989" name="Infect. Immun.">
        <title>Isolation and characterization of the alpha-galactosyl-1,4-beta-galactosyl-specific adhesin (P adhesin) from fimbriated Escherichia coli.</title>
        <authorList>
            <person name="Hoschuetzky H."/>
            <person name="Lottspeich F."/>
            <person name="Jann K."/>
        </authorList>
    </citation>
    <scope>PROTEIN SEQUENCE OF 22-39</scope>
</reference>
<reference key="5">
    <citation type="journal article" date="1994" name="Mol. Microbiol.">
        <title>The amino-terminal domain of the P-pilus adhesin determines receptor specificity.</title>
        <authorList>
            <person name="Haslam D.B."/>
            <person name="Boren T."/>
            <person name="Falk P."/>
            <person name="Ilver D."/>
            <person name="Chou A."/>
            <person name="Xu Z."/>
            <person name="Normark S."/>
        </authorList>
    </citation>
    <scope>FUNCTION</scope>
</reference>
<reference key="6">
    <citation type="journal article" date="2019" name="Glycobiology">
        <title>PapG subtype-specific binding characteristics of Escherichia coli towards globo-series glycosphingolipids of human kidney and bladder uroepithelial cells.</title>
        <authorList>
            <person name="Legros N."/>
            <person name="Ptascheck S."/>
            <person name="Pohlentz G."/>
            <person name="Karch H."/>
            <person name="Dobrindt U."/>
            <person name="Muething J."/>
        </authorList>
    </citation>
    <scope>FUNCTION</scope>
</reference>
<reference key="7">
    <citation type="journal article" date="1997" name="EMBO J.">
        <title>The chaperone-assisted membrane release and folding pathway is sensed by two signal transduction systems.</title>
        <authorList>
            <person name="Jones C.H."/>
            <person name="Danese P.N."/>
            <person name="Pinkner J.S."/>
            <person name="Silhavy T.J."/>
            <person name="Hultgren S.J."/>
        </authorList>
    </citation>
    <scope>FUNCTION</scope>
    <scope>SUBUNIT</scope>
    <scope>DISULFIDE BOND</scope>
    <scope>MUTAGENESIS OF 225-ASN--PRO-335; 332-GLY--PHE-334 AND PHE-334</scope>
</reference>
<reference key="8">
    <citation type="journal article" date="1998" name="J. Struct. Biol.">
        <title>Pilus biogenesis via the chaperone/usher pathway: an integration of structure and function.</title>
        <authorList>
            <person name="Hung D.L."/>
            <person name="Hultgren S.J."/>
        </authorList>
    </citation>
    <scope>REVIEW</scope>
</reference>
<name>PAPG1_ECOLX</name>
<comment type="function">
    <text evidence="1 2 3 4">Tip adhesin component of type P pili that binds preferentially to host cell glycosphingolipids such as globotriaosylceramide.</text>
</comment>
<comment type="subunit">
    <text evidence="4">Interacts with chaperone PapD. Assembly of the P pilus requires periplasmic chaperone PapD, in absence of the chaperone overexpression of this subunit is toxic, where the protein accumulates in the periplasm. PapD stimulates release of PapG from an inner membrane-associated form (where at least 1 disulfide bond can form) into the periplasm and also helps it achieve its correct digalactoside-binding conformation (PubMed:9351822).</text>
</comment>
<comment type="interaction">
    <interactant intactId="EBI-15725472">
        <id>P13720</id>
    </interactant>
    <interactant intactId="EBI-1034993">
        <id>P15319</id>
        <label>papD</label>
    </interactant>
    <organismsDiffer>false</organismsDiffer>
    <experiments>2</experiments>
</comment>
<comment type="subcellular location">
    <subcellularLocation>
        <location>Secreted</location>
    </subcellularLocation>
    <subcellularLocation>
        <location>Fimbrium</location>
    </subcellularLocation>
    <text evidence="2">At the tip of P pili.</text>
</comment>
<comment type="PTM">
    <text evidence="4">Contains disulfide bonds (PubMed:9351822).</text>
</comment>
<comment type="similarity">
    <text evidence="6">Belongs to the adhesin PapG family.</text>
</comment>
<evidence type="ECO:0000269" key="1">
    <source>
    </source>
</evidence>
<evidence type="ECO:0000269" key="2">
    <source>
    </source>
</evidence>
<evidence type="ECO:0000269" key="3">
    <source>
    </source>
</evidence>
<evidence type="ECO:0000269" key="4">
    <source>
    </source>
</evidence>
<evidence type="ECO:0000303" key="5">
    <source>
    </source>
</evidence>
<evidence type="ECO:0000305" key="6"/>
<feature type="signal peptide" evidence="1">
    <location>
        <begin position="1"/>
        <end position="21"/>
    </location>
</feature>
<feature type="chain" id="PRO_0000022005" description="Fimbrial adhesin PapGI">
    <location>
        <begin position="22"/>
        <end position="335"/>
    </location>
</feature>
<feature type="mutagenesis site" description="No longer dependent on chaperone PapD for release into periplasm." evidence="4">
    <location>
        <begin position="225"/>
        <end position="335"/>
    </location>
</feature>
<feature type="mutagenesis site" description="No longer dependent on chaperone PapD for release into periplasm." evidence="4">
    <original>GELSGSMTMVLSF</original>
    <variation>VELSGSMTMVLSS</variation>
    <location>
        <begin position="322"/>
        <end position="334"/>
    </location>
</feature>
<feature type="mutagenesis site" description="Decreased dependence on chaperone PapD for release into periplasm." evidence="4">
    <original>F</original>
    <variation>S</variation>
    <location>
        <position position="334"/>
    </location>
</feature>
<organism>
    <name type="scientific">Escherichia coli</name>
    <dbReference type="NCBI Taxonomy" id="562"/>
    <lineage>
        <taxon>Bacteria</taxon>
        <taxon>Pseudomonadati</taxon>
        <taxon>Pseudomonadota</taxon>
        <taxon>Gammaproteobacteria</taxon>
        <taxon>Enterobacterales</taxon>
        <taxon>Enterobacteriaceae</taxon>
        <taxon>Escherichia</taxon>
    </lineage>
</organism>
<keyword id="KW-0130">Cell adhesion</keyword>
<keyword id="KW-0903">Direct protein sequencing</keyword>
<keyword id="KW-1015">Disulfide bond</keyword>
<keyword id="KW-0281">Fimbrium</keyword>
<keyword id="KW-0964">Secreted</keyword>
<keyword id="KW-0732">Signal</keyword>
<dbReference type="EMBL" id="M17317">
    <property type="protein sequence ID" value="AAA24285.1"/>
    <property type="molecule type" value="Genomic_DNA"/>
</dbReference>
<dbReference type="EMBL" id="M20146">
    <property type="protein sequence ID" value="AAA24290.1"/>
    <property type="molecule type" value="Genomic_DNA"/>
</dbReference>
<dbReference type="EMBL" id="X61239">
    <property type="protein sequence ID" value="CAA43570.1"/>
    <property type="molecule type" value="Genomic_DNA"/>
</dbReference>
<dbReference type="PIR" id="G27743">
    <property type="entry name" value="G27743"/>
</dbReference>
<dbReference type="SMR" id="P13720"/>
<dbReference type="DIP" id="DIP-60777N"/>
<dbReference type="IntAct" id="P13720">
    <property type="interactions" value="2"/>
</dbReference>
<dbReference type="PHI-base" id="PHI:7847"/>
<dbReference type="GO" id="GO:0005576">
    <property type="term" value="C:extracellular region"/>
    <property type="evidence" value="ECO:0007669"/>
    <property type="project" value="UniProtKB-SubCell"/>
</dbReference>
<dbReference type="GO" id="GO:0009289">
    <property type="term" value="C:pilus"/>
    <property type="evidence" value="ECO:0007669"/>
    <property type="project" value="UniProtKB-SubCell"/>
</dbReference>
<dbReference type="GO" id="GO:0030246">
    <property type="term" value="F:carbohydrate binding"/>
    <property type="evidence" value="ECO:0007669"/>
    <property type="project" value="InterPro"/>
</dbReference>
<dbReference type="GO" id="GO:0007155">
    <property type="term" value="P:cell adhesion"/>
    <property type="evidence" value="ECO:0007669"/>
    <property type="project" value="UniProtKB-KW"/>
</dbReference>
<dbReference type="CDD" id="cd00239">
    <property type="entry name" value="PapG_CBD"/>
    <property type="match status" value="1"/>
</dbReference>
<dbReference type="Gene3D" id="2.60.40.1370">
    <property type="entry name" value="Bacterial adhesin receptor binding domain"/>
    <property type="match status" value="1"/>
</dbReference>
<dbReference type="Gene3D" id="2.60.40.1090">
    <property type="entry name" value="Fimbrial-type adhesion domain"/>
    <property type="match status" value="1"/>
</dbReference>
<dbReference type="InterPro" id="IPR036937">
    <property type="entry name" value="Adhesion_dom_fimbrial_sf"/>
</dbReference>
<dbReference type="InterPro" id="IPR008966">
    <property type="entry name" value="Adhesion_dom_sf"/>
</dbReference>
<dbReference type="InterPro" id="IPR005310">
    <property type="entry name" value="PapG_carb-bd_N"/>
</dbReference>
<dbReference type="InterPro" id="IPR038420">
    <property type="entry name" value="PapG_carbohydrate-bd_sf"/>
</dbReference>
<dbReference type="InterPro" id="IPR005309">
    <property type="entry name" value="PapG_chaper-bd_C"/>
</dbReference>
<dbReference type="Pfam" id="PF03628">
    <property type="entry name" value="PapG_C"/>
    <property type="match status" value="1"/>
</dbReference>
<dbReference type="Pfam" id="PF03627">
    <property type="entry name" value="PapG_N"/>
    <property type="match status" value="1"/>
</dbReference>
<dbReference type="SUPFAM" id="SSF49401">
    <property type="entry name" value="Bacterial adhesins"/>
    <property type="match status" value="1"/>
</dbReference>
<proteinExistence type="evidence at protein level"/>
<protein>
    <recommendedName>
        <fullName evidence="5">Fimbrial adhesin PapGI</fullName>
    </recommendedName>
</protein>
<gene>
    <name evidence="5" type="primary">papGI</name>
</gene>